<name>DAPB_BACHK</name>
<gene>
    <name evidence="1" type="primary">dapB</name>
    <name type="ordered locus">BT9727_1414</name>
</gene>
<comment type="function">
    <text evidence="1">Catalyzes the conversion of 4-hydroxy-tetrahydrodipicolinate (HTPA) to tetrahydrodipicolinate.</text>
</comment>
<comment type="catalytic activity">
    <reaction evidence="1">
        <text>(S)-2,3,4,5-tetrahydrodipicolinate + NAD(+) + H2O = (2S,4S)-4-hydroxy-2,3,4,5-tetrahydrodipicolinate + NADH + H(+)</text>
        <dbReference type="Rhea" id="RHEA:35323"/>
        <dbReference type="ChEBI" id="CHEBI:15377"/>
        <dbReference type="ChEBI" id="CHEBI:15378"/>
        <dbReference type="ChEBI" id="CHEBI:16845"/>
        <dbReference type="ChEBI" id="CHEBI:57540"/>
        <dbReference type="ChEBI" id="CHEBI:57945"/>
        <dbReference type="ChEBI" id="CHEBI:67139"/>
        <dbReference type="EC" id="1.17.1.8"/>
    </reaction>
</comment>
<comment type="catalytic activity">
    <reaction evidence="1">
        <text>(S)-2,3,4,5-tetrahydrodipicolinate + NADP(+) + H2O = (2S,4S)-4-hydroxy-2,3,4,5-tetrahydrodipicolinate + NADPH + H(+)</text>
        <dbReference type="Rhea" id="RHEA:35331"/>
        <dbReference type="ChEBI" id="CHEBI:15377"/>
        <dbReference type="ChEBI" id="CHEBI:15378"/>
        <dbReference type="ChEBI" id="CHEBI:16845"/>
        <dbReference type="ChEBI" id="CHEBI:57783"/>
        <dbReference type="ChEBI" id="CHEBI:58349"/>
        <dbReference type="ChEBI" id="CHEBI:67139"/>
        <dbReference type="EC" id="1.17.1.8"/>
    </reaction>
</comment>
<comment type="pathway">
    <text evidence="1">Amino-acid biosynthesis; L-lysine biosynthesis via DAP pathway; (S)-tetrahydrodipicolinate from L-aspartate: step 4/4.</text>
</comment>
<comment type="subcellular location">
    <subcellularLocation>
        <location evidence="1">Cytoplasm</location>
    </subcellularLocation>
</comment>
<comment type="similarity">
    <text evidence="1">Belongs to the DapB family.</text>
</comment>
<comment type="caution">
    <text evidence="2">Was originally thought to be a dihydrodipicolinate reductase (DHDPR), catalyzing the conversion of dihydrodipicolinate to tetrahydrodipicolinate. However, it was shown in E.coli that the substrate of the enzymatic reaction is not dihydrodipicolinate (DHDP) but in fact (2S,4S)-4-hydroxy-2,3,4,5-tetrahydrodipicolinic acid (HTPA), the product released by the DapA-catalyzed reaction.</text>
</comment>
<sequence>MKEMKVIIAGPRGRMGHEAVLLMERTEHFNLVAAVDYKHGGEKISDLPGMPALDAPIYADLHTCLEEVEADVLLDLTTPEVGKQHVTLAVERGLRSVIGTTGFTEEELKQLTETAKEKAVGTIIAPNFAIGAVLMMKFSQMAAKYFQDVEVIELHHDQKLDAPSGTAVKTVELIRQNRESKQQGHPNEVEQLEGARGANVDGIHIHSVRLPGLIAHQEVMFGGDGQMLTVRHDSFNRASFMSGVKLSIETVMNLDHLVYGLENIID</sequence>
<dbReference type="EC" id="1.17.1.8" evidence="1"/>
<dbReference type="EMBL" id="AE017355">
    <property type="protein sequence ID" value="AAT63204.1"/>
    <property type="molecule type" value="Genomic_DNA"/>
</dbReference>
<dbReference type="RefSeq" id="WP_000661724.1">
    <property type="nucleotide sequence ID" value="NC_005957.1"/>
</dbReference>
<dbReference type="RefSeq" id="YP_035748.1">
    <property type="nucleotide sequence ID" value="NC_005957.1"/>
</dbReference>
<dbReference type="SMR" id="Q6HL23"/>
<dbReference type="KEGG" id="btk:BT9727_1414"/>
<dbReference type="PATRIC" id="fig|281309.8.peg.1486"/>
<dbReference type="HOGENOM" id="CLU_047479_0_1_9"/>
<dbReference type="UniPathway" id="UPA00034">
    <property type="reaction ID" value="UER00018"/>
</dbReference>
<dbReference type="Proteomes" id="UP000001301">
    <property type="component" value="Chromosome"/>
</dbReference>
<dbReference type="GO" id="GO:0005829">
    <property type="term" value="C:cytosol"/>
    <property type="evidence" value="ECO:0007669"/>
    <property type="project" value="TreeGrafter"/>
</dbReference>
<dbReference type="GO" id="GO:0008839">
    <property type="term" value="F:4-hydroxy-tetrahydrodipicolinate reductase"/>
    <property type="evidence" value="ECO:0007669"/>
    <property type="project" value="UniProtKB-EC"/>
</dbReference>
<dbReference type="GO" id="GO:0051287">
    <property type="term" value="F:NAD binding"/>
    <property type="evidence" value="ECO:0007669"/>
    <property type="project" value="UniProtKB-UniRule"/>
</dbReference>
<dbReference type="GO" id="GO:0050661">
    <property type="term" value="F:NADP binding"/>
    <property type="evidence" value="ECO:0007669"/>
    <property type="project" value="UniProtKB-UniRule"/>
</dbReference>
<dbReference type="GO" id="GO:0016726">
    <property type="term" value="F:oxidoreductase activity, acting on CH or CH2 groups, NAD or NADP as acceptor"/>
    <property type="evidence" value="ECO:0007669"/>
    <property type="project" value="UniProtKB-UniRule"/>
</dbReference>
<dbReference type="GO" id="GO:0019877">
    <property type="term" value="P:diaminopimelate biosynthetic process"/>
    <property type="evidence" value="ECO:0007669"/>
    <property type="project" value="UniProtKB-UniRule"/>
</dbReference>
<dbReference type="GO" id="GO:0009089">
    <property type="term" value="P:lysine biosynthetic process via diaminopimelate"/>
    <property type="evidence" value="ECO:0007669"/>
    <property type="project" value="UniProtKB-UniRule"/>
</dbReference>
<dbReference type="CDD" id="cd02274">
    <property type="entry name" value="DHDPR_N"/>
    <property type="match status" value="1"/>
</dbReference>
<dbReference type="FunFam" id="3.30.360.10:FF:000009">
    <property type="entry name" value="4-hydroxy-tetrahydrodipicolinate reductase"/>
    <property type="match status" value="1"/>
</dbReference>
<dbReference type="FunFam" id="3.40.50.720:FF:000180">
    <property type="entry name" value="4-hydroxy-tetrahydrodipicolinate reductase"/>
    <property type="match status" value="1"/>
</dbReference>
<dbReference type="Gene3D" id="3.30.360.10">
    <property type="entry name" value="Dihydrodipicolinate Reductase, domain 2"/>
    <property type="match status" value="1"/>
</dbReference>
<dbReference type="Gene3D" id="3.40.50.720">
    <property type="entry name" value="NAD(P)-binding Rossmann-like Domain"/>
    <property type="match status" value="1"/>
</dbReference>
<dbReference type="HAMAP" id="MF_00102">
    <property type="entry name" value="DapB"/>
    <property type="match status" value="1"/>
</dbReference>
<dbReference type="InterPro" id="IPR022663">
    <property type="entry name" value="DapB_C"/>
</dbReference>
<dbReference type="InterPro" id="IPR000846">
    <property type="entry name" value="DapB_N"/>
</dbReference>
<dbReference type="InterPro" id="IPR022664">
    <property type="entry name" value="DapB_N_CS"/>
</dbReference>
<dbReference type="InterPro" id="IPR023940">
    <property type="entry name" value="DHDPR_bac"/>
</dbReference>
<dbReference type="InterPro" id="IPR036291">
    <property type="entry name" value="NAD(P)-bd_dom_sf"/>
</dbReference>
<dbReference type="NCBIfam" id="TIGR00036">
    <property type="entry name" value="dapB"/>
    <property type="match status" value="1"/>
</dbReference>
<dbReference type="PANTHER" id="PTHR20836:SF0">
    <property type="entry name" value="4-HYDROXY-TETRAHYDRODIPICOLINATE REDUCTASE 1, CHLOROPLASTIC-RELATED"/>
    <property type="match status" value="1"/>
</dbReference>
<dbReference type="PANTHER" id="PTHR20836">
    <property type="entry name" value="DIHYDRODIPICOLINATE REDUCTASE"/>
    <property type="match status" value="1"/>
</dbReference>
<dbReference type="Pfam" id="PF05173">
    <property type="entry name" value="DapB_C"/>
    <property type="match status" value="1"/>
</dbReference>
<dbReference type="Pfam" id="PF01113">
    <property type="entry name" value="DapB_N"/>
    <property type="match status" value="1"/>
</dbReference>
<dbReference type="PIRSF" id="PIRSF000161">
    <property type="entry name" value="DHPR"/>
    <property type="match status" value="1"/>
</dbReference>
<dbReference type="SUPFAM" id="SSF55347">
    <property type="entry name" value="Glyceraldehyde-3-phosphate dehydrogenase-like, C-terminal domain"/>
    <property type="match status" value="1"/>
</dbReference>
<dbReference type="SUPFAM" id="SSF51735">
    <property type="entry name" value="NAD(P)-binding Rossmann-fold domains"/>
    <property type="match status" value="1"/>
</dbReference>
<dbReference type="PROSITE" id="PS01298">
    <property type="entry name" value="DAPB"/>
    <property type="match status" value="1"/>
</dbReference>
<proteinExistence type="inferred from homology"/>
<accession>Q6HL23</accession>
<keyword id="KW-0028">Amino-acid biosynthesis</keyword>
<keyword id="KW-0963">Cytoplasm</keyword>
<keyword id="KW-0220">Diaminopimelate biosynthesis</keyword>
<keyword id="KW-0457">Lysine biosynthesis</keyword>
<keyword id="KW-0520">NAD</keyword>
<keyword id="KW-0521">NADP</keyword>
<keyword id="KW-0560">Oxidoreductase</keyword>
<evidence type="ECO:0000255" key="1">
    <source>
        <dbReference type="HAMAP-Rule" id="MF_00102"/>
    </source>
</evidence>
<evidence type="ECO:0000305" key="2"/>
<organism>
    <name type="scientific">Bacillus thuringiensis subsp. konkukian (strain 97-27)</name>
    <dbReference type="NCBI Taxonomy" id="281309"/>
    <lineage>
        <taxon>Bacteria</taxon>
        <taxon>Bacillati</taxon>
        <taxon>Bacillota</taxon>
        <taxon>Bacilli</taxon>
        <taxon>Bacillales</taxon>
        <taxon>Bacillaceae</taxon>
        <taxon>Bacillus</taxon>
        <taxon>Bacillus cereus group</taxon>
    </lineage>
</organism>
<feature type="chain" id="PRO_0000228325" description="4-hydroxy-tetrahydrodipicolinate reductase">
    <location>
        <begin position="1"/>
        <end position="266"/>
    </location>
</feature>
<feature type="active site" description="Proton donor/acceptor" evidence="1">
    <location>
        <position position="155"/>
    </location>
</feature>
<feature type="active site" description="Proton donor" evidence="1">
    <location>
        <position position="159"/>
    </location>
</feature>
<feature type="binding site" evidence="1">
    <location>
        <begin position="10"/>
        <end position="15"/>
    </location>
    <ligand>
        <name>NAD(+)</name>
        <dbReference type="ChEBI" id="CHEBI:57540"/>
    </ligand>
</feature>
<feature type="binding site" evidence="1">
    <location>
        <position position="38"/>
    </location>
    <ligand>
        <name>NADP(+)</name>
        <dbReference type="ChEBI" id="CHEBI:58349"/>
    </ligand>
</feature>
<feature type="binding site" evidence="1">
    <location>
        <begin position="99"/>
        <end position="101"/>
    </location>
    <ligand>
        <name>NAD(+)</name>
        <dbReference type="ChEBI" id="CHEBI:57540"/>
    </ligand>
</feature>
<feature type="binding site" evidence="1">
    <location>
        <begin position="125"/>
        <end position="128"/>
    </location>
    <ligand>
        <name>NAD(+)</name>
        <dbReference type="ChEBI" id="CHEBI:57540"/>
    </ligand>
</feature>
<feature type="binding site" evidence="1">
    <location>
        <position position="156"/>
    </location>
    <ligand>
        <name>(S)-2,3,4,5-tetrahydrodipicolinate</name>
        <dbReference type="ChEBI" id="CHEBI:16845"/>
    </ligand>
</feature>
<feature type="binding site" evidence="1">
    <location>
        <begin position="165"/>
        <end position="166"/>
    </location>
    <ligand>
        <name>(S)-2,3,4,5-tetrahydrodipicolinate</name>
        <dbReference type="ChEBI" id="CHEBI:16845"/>
    </ligand>
</feature>
<reference key="1">
    <citation type="journal article" date="2006" name="J. Bacteriol.">
        <title>Pathogenomic sequence analysis of Bacillus cereus and Bacillus thuringiensis isolates closely related to Bacillus anthracis.</title>
        <authorList>
            <person name="Han C.S."/>
            <person name="Xie G."/>
            <person name="Challacombe J.F."/>
            <person name="Altherr M.R."/>
            <person name="Bhotika S.S."/>
            <person name="Bruce D."/>
            <person name="Campbell C.S."/>
            <person name="Campbell M.L."/>
            <person name="Chen J."/>
            <person name="Chertkov O."/>
            <person name="Cleland C."/>
            <person name="Dimitrijevic M."/>
            <person name="Doggett N.A."/>
            <person name="Fawcett J.J."/>
            <person name="Glavina T."/>
            <person name="Goodwin L.A."/>
            <person name="Hill K.K."/>
            <person name="Hitchcock P."/>
            <person name="Jackson P.J."/>
            <person name="Keim P."/>
            <person name="Kewalramani A.R."/>
            <person name="Longmire J."/>
            <person name="Lucas S."/>
            <person name="Malfatti S."/>
            <person name="McMurry K."/>
            <person name="Meincke L.J."/>
            <person name="Misra M."/>
            <person name="Moseman B.L."/>
            <person name="Mundt M."/>
            <person name="Munk A.C."/>
            <person name="Okinaka R.T."/>
            <person name="Parson-Quintana B."/>
            <person name="Reilly L.P."/>
            <person name="Richardson P."/>
            <person name="Robinson D.L."/>
            <person name="Rubin E."/>
            <person name="Saunders E."/>
            <person name="Tapia R."/>
            <person name="Tesmer J.G."/>
            <person name="Thayer N."/>
            <person name="Thompson L.S."/>
            <person name="Tice H."/>
            <person name="Ticknor L.O."/>
            <person name="Wills P.L."/>
            <person name="Brettin T.S."/>
            <person name="Gilna P."/>
        </authorList>
    </citation>
    <scope>NUCLEOTIDE SEQUENCE [LARGE SCALE GENOMIC DNA]</scope>
    <source>
        <strain>97-27</strain>
    </source>
</reference>
<protein>
    <recommendedName>
        <fullName evidence="1">4-hydroxy-tetrahydrodipicolinate reductase</fullName>
        <shortName evidence="1">HTPA reductase</shortName>
        <ecNumber evidence="1">1.17.1.8</ecNumber>
    </recommendedName>
</protein>